<sequence length="311" mass="35281">MTVLWVAAVIALACLNVIQFIMKKKRDGNLAYTADQLSYMLSRDSAGQILLPTDDHALKDLLVNINLIVENRQQISAQFAKTEQSMKRMLTNMSHDLKTPLTVILGYIEAIQSDPNMPDEERERLLGKLRQKTNELIQMINSFFDLAKLESEDKEIPITKVHMNDICKRNILHYYDAVQSKGFQAAIDIPDTPVYAQANEEALDRILQNLLSNAIQYGAAGKLIGLTLSYDERNIAITVWDRGKGISETDQQRVFERLYTLEESRNKAFQGSGLGLTITKRLTEKMGGIISVQSKPYERTAFTITLKRMTY</sequence>
<dbReference type="EC" id="2.7.13.3"/>
<dbReference type="EMBL" id="D30808">
    <property type="protein sequence ID" value="BAA06477.1"/>
    <property type="molecule type" value="Genomic_DNA"/>
</dbReference>
<dbReference type="EMBL" id="AL009126">
    <property type="protein sequence ID" value="CAB12050.2"/>
    <property type="molecule type" value="Genomic_DNA"/>
</dbReference>
<dbReference type="PIR" id="G69753">
    <property type="entry name" value="G69753"/>
</dbReference>
<dbReference type="RefSeq" id="NP_388138.2">
    <property type="nucleotide sequence ID" value="NC_000964.3"/>
</dbReference>
<dbReference type="RefSeq" id="WP_003246497.1">
    <property type="nucleotide sequence ID" value="NZ_OZ025638.1"/>
</dbReference>
<dbReference type="SMR" id="P42245"/>
<dbReference type="FunCoup" id="P42245">
    <property type="interactions" value="37"/>
</dbReference>
<dbReference type="STRING" id="224308.BSU02560"/>
<dbReference type="PaxDb" id="224308-BSU02560"/>
<dbReference type="EnsemblBacteria" id="CAB12050">
    <property type="protein sequence ID" value="CAB12050"/>
    <property type="gene ID" value="BSU_02560"/>
</dbReference>
<dbReference type="GeneID" id="938397"/>
<dbReference type="KEGG" id="bsu:BSU02560"/>
<dbReference type="PATRIC" id="fig|224308.179.peg.264"/>
<dbReference type="eggNOG" id="COG2205">
    <property type="taxonomic scope" value="Bacteria"/>
</dbReference>
<dbReference type="InParanoid" id="P42245"/>
<dbReference type="OrthoDB" id="9792991at2"/>
<dbReference type="PhylomeDB" id="P42245"/>
<dbReference type="BioCyc" id="BSUB:BSU02560-MONOMER"/>
<dbReference type="Proteomes" id="UP000001570">
    <property type="component" value="Chromosome"/>
</dbReference>
<dbReference type="GO" id="GO:0005886">
    <property type="term" value="C:plasma membrane"/>
    <property type="evidence" value="ECO:0007669"/>
    <property type="project" value="UniProtKB-SubCell"/>
</dbReference>
<dbReference type="GO" id="GO:0005524">
    <property type="term" value="F:ATP binding"/>
    <property type="evidence" value="ECO:0007669"/>
    <property type="project" value="UniProtKB-KW"/>
</dbReference>
<dbReference type="GO" id="GO:0000156">
    <property type="term" value="F:phosphorelay response regulator activity"/>
    <property type="evidence" value="ECO:0000318"/>
    <property type="project" value="GO_Central"/>
</dbReference>
<dbReference type="GO" id="GO:0000155">
    <property type="term" value="F:phosphorelay sensor kinase activity"/>
    <property type="evidence" value="ECO:0007669"/>
    <property type="project" value="InterPro"/>
</dbReference>
<dbReference type="GO" id="GO:0030295">
    <property type="term" value="F:protein kinase activator activity"/>
    <property type="evidence" value="ECO:0000318"/>
    <property type="project" value="GO_Central"/>
</dbReference>
<dbReference type="GO" id="GO:0007234">
    <property type="term" value="P:osmosensory signaling via phosphorelay pathway"/>
    <property type="evidence" value="ECO:0000318"/>
    <property type="project" value="GO_Central"/>
</dbReference>
<dbReference type="CDD" id="cd16947">
    <property type="entry name" value="HATPase_YcbM-like"/>
    <property type="match status" value="1"/>
</dbReference>
<dbReference type="CDD" id="cd00082">
    <property type="entry name" value="HisKA"/>
    <property type="match status" value="1"/>
</dbReference>
<dbReference type="FunFam" id="1.10.287.130:FF:000008">
    <property type="entry name" value="Two-component sensor histidine kinase"/>
    <property type="match status" value="1"/>
</dbReference>
<dbReference type="FunFam" id="3.30.565.10:FF:000013">
    <property type="entry name" value="Two-component sensor histidine kinase"/>
    <property type="match status" value="1"/>
</dbReference>
<dbReference type="Gene3D" id="1.10.287.130">
    <property type="match status" value="1"/>
</dbReference>
<dbReference type="Gene3D" id="3.30.565.10">
    <property type="entry name" value="Histidine kinase-like ATPase, C-terminal domain"/>
    <property type="match status" value="1"/>
</dbReference>
<dbReference type="InterPro" id="IPR050351">
    <property type="entry name" value="2-comp_sensor_kinase"/>
</dbReference>
<dbReference type="InterPro" id="IPR036890">
    <property type="entry name" value="HATPase_C_sf"/>
</dbReference>
<dbReference type="InterPro" id="IPR005467">
    <property type="entry name" value="His_kinase_dom"/>
</dbReference>
<dbReference type="InterPro" id="IPR003661">
    <property type="entry name" value="HisK_dim/P_dom"/>
</dbReference>
<dbReference type="InterPro" id="IPR036097">
    <property type="entry name" value="HisK_dim/P_sf"/>
</dbReference>
<dbReference type="InterPro" id="IPR004358">
    <property type="entry name" value="Sig_transdc_His_kin-like_C"/>
</dbReference>
<dbReference type="InterPro" id="IPR047963">
    <property type="entry name" value="YcbM-like_HATPase"/>
</dbReference>
<dbReference type="PANTHER" id="PTHR45453">
    <property type="entry name" value="PHOSPHATE REGULON SENSOR PROTEIN PHOR"/>
    <property type="match status" value="1"/>
</dbReference>
<dbReference type="PANTHER" id="PTHR45453:SF1">
    <property type="entry name" value="PHOSPHATE REGULON SENSOR PROTEIN PHOR"/>
    <property type="match status" value="1"/>
</dbReference>
<dbReference type="Pfam" id="PF02518">
    <property type="entry name" value="HATPase_c"/>
    <property type="match status" value="1"/>
</dbReference>
<dbReference type="Pfam" id="PF00512">
    <property type="entry name" value="HisKA"/>
    <property type="match status" value="1"/>
</dbReference>
<dbReference type="PRINTS" id="PR00344">
    <property type="entry name" value="BCTRLSENSOR"/>
</dbReference>
<dbReference type="SMART" id="SM00387">
    <property type="entry name" value="HATPase_c"/>
    <property type="match status" value="1"/>
</dbReference>
<dbReference type="SMART" id="SM00388">
    <property type="entry name" value="HisKA"/>
    <property type="match status" value="1"/>
</dbReference>
<dbReference type="SUPFAM" id="SSF55874">
    <property type="entry name" value="ATPase domain of HSP90 chaperone/DNA topoisomerase II/histidine kinase"/>
    <property type="match status" value="1"/>
</dbReference>
<dbReference type="SUPFAM" id="SSF47384">
    <property type="entry name" value="Homodimeric domain of signal transducing histidine kinase"/>
    <property type="match status" value="1"/>
</dbReference>
<dbReference type="PROSITE" id="PS50109">
    <property type="entry name" value="HIS_KIN"/>
    <property type="match status" value="1"/>
</dbReference>
<gene>
    <name type="primary">ycbM</name>
    <name type="ordered locus">BSU02560</name>
</gene>
<organism>
    <name type="scientific">Bacillus subtilis (strain 168)</name>
    <dbReference type="NCBI Taxonomy" id="224308"/>
    <lineage>
        <taxon>Bacteria</taxon>
        <taxon>Bacillati</taxon>
        <taxon>Bacillota</taxon>
        <taxon>Bacilli</taxon>
        <taxon>Bacillales</taxon>
        <taxon>Bacillaceae</taxon>
        <taxon>Bacillus</taxon>
    </lineage>
</organism>
<feature type="chain" id="PRO_0000074919" description="Sensor histidine kinase YcbM">
    <location>
        <begin position="1"/>
        <end position="311"/>
    </location>
</feature>
<feature type="transmembrane region" description="Helical" evidence="1">
    <location>
        <begin position="1"/>
        <end position="21"/>
    </location>
</feature>
<feature type="topological domain" description="Cytoplasmic" evidence="1">
    <location>
        <begin position="22"/>
        <end position="311"/>
    </location>
</feature>
<feature type="domain" description="Histidine kinase" evidence="2">
    <location>
        <begin position="92"/>
        <end position="310"/>
    </location>
</feature>
<feature type="modified residue" description="Phosphohistidine; by autocatalysis" evidence="2">
    <location>
        <position position="95"/>
    </location>
</feature>
<feature type="sequence conflict" description="In Ref. 1; BAA06477." evidence="4" ref="1">
    <location>
        <begin position="76"/>
        <end position="228"/>
    </location>
</feature>
<feature type="sequence conflict" description="In Ref. 1; BAA06477." evidence="4" ref="1">
    <original>SY</original>
    <variation>RI</variation>
    <location>
        <begin position="229"/>
        <end position="230"/>
    </location>
</feature>
<feature type="sequence conflict" description="In Ref. 1; BAA06477." evidence="4" ref="1">
    <original>N</original>
    <variation>L</variation>
    <location>
        <position position="234"/>
    </location>
</feature>
<accession>P42245</accession>
<evidence type="ECO:0000255" key="1"/>
<evidence type="ECO:0000255" key="2">
    <source>
        <dbReference type="PROSITE-ProRule" id="PRU00107"/>
    </source>
</evidence>
<evidence type="ECO:0000269" key="3">
    <source>
    </source>
</evidence>
<evidence type="ECO:0000305" key="4"/>
<keyword id="KW-0067">ATP-binding</keyword>
<keyword id="KW-1003">Cell membrane</keyword>
<keyword id="KW-0418">Kinase</keyword>
<keyword id="KW-0472">Membrane</keyword>
<keyword id="KW-0547">Nucleotide-binding</keyword>
<keyword id="KW-0597">Phosphoprotein</keyword>
<keyword id="KW-1185">Reference proteome</keyword>
<keyword id="KW-0808">Transferase</keyword>
<keyword id="KW-0812">Transmembrane</keyword>
<keyword id="KW-1133">Transmembrane helix</keyword>
<keyword id="KW-0902">Two-component regulatory system</keyword>
<name>YCBM_BACSU</name>
<comment type="function">
    <text evidence="3">Member of the two-component regulatory system YcbM/YcbL. Probably activates YcbL by phosphorylation.</text>
</comment>
<comment type="catalytic activity">
    <reaction>
        <text>ATP + protein L-histidine = ADP + protein N-phospho-L-histidine.</text>
        <dbReference type="EC" id="2.7.13.3"/>
    </reaction>
</comment>
<comment type="subcellular location">
    <subcellularLocation>
        <location evidence="4">Cell membrane</location>
        <topology evidence="4">Single-pass membrane protein</topology>
    </subcellularLocation>
</comment>
<reference key="1">
    <citation type="journal article" date="1995" name="Microbiology">
        <title>Determination of a 21548 bp nucleotide sequence around the 24 degrees region of the Bacillus subtilis chromosome.</title>
        <authorList>
            <person name="Ogawa K."/>
            <person name="Akagawa E."/>
            <person name="Nakamura K."/>
            <person name="Yamane K."/>
        </authorList>
    </citation>
    <scope>NUCLEOTIDE SEQUENCE [GENOMIC DNA]</scope>
    <source>
        <strain>168</strain>
    </source>
</reference>
<reference key="2">
    <citation type="journal article" date="1997" name="Nature">
        <title>The complete genome sequence of the Gram-positive bacterium Bacillus subtilis.</title>
        <authorList>
            <person name="Kunst F."/>
            <person name="Ogasawara N."/>
            <person name="Moszer I."/>
            <person name="Albertini A.M."/>
            <person name="Alloni G."/>
            <person name="Azevedo V."/>
            <person name="Bertero M.G."/>
            <person name="Bessieres P."/>
            <person name="Bolotin A."/>
            <person name="Borchert S."/>
            <person name="Borriss R."/>
            <person name="Boursier L."/>
            <person name="Brans A."/>
            <person name="Braun M."/>
            <person name="Brignell S.C."/>
            <person name="Bron S."/>
            <person name="Brouillet S."/>
            <person name="Bruschi C.V."/>
            <person name="Caldwell B."/>
            <person name="Capuano V."/>
            <person name="Carter N.M."/>
            <person name="Choi S.-K."/>
            <person name="Codani J.-J."/>
            <person name="Connerton I.F."/>
            <person name="Cummings N.J."/>
            <person name="Daniel R.A."/>
            <person name="Denizot F."/>
            <person name="Devine K.M."/>
            <person name="Duesterhoeft A."/>
            <person name="Ehrlich S.D."/>
            <person name="Emmerson P.T."/>
            <person name="Entian K.-D."/>
            <person name="Errington J."/>
            <person name="Fabret C."/>
            <person name="Ferrari E."/>
            <person name="Foulger D."/>
            <person name="Fritz C."/>
            <person name="Fujita M."/>
            <person name="Fujita Y."/>
            <person name="Fuma S."/>
            <person name="Galizzi A."/>
            <person name="Galleron N."/>
            <person name="Ghim S.-Y."/>
            <person name="Glaser P."/>
            <person name="Goffeau A."/>
            <person name="Golightly E.J."/>
            <person name="Grandi G."/>
            <person name="Guiseppi G."/>
            <person name="Guy B.J."/>
            <person name="Haga K."/>
            <person name="Haiech J."/>
            <person name="Harwood C.R."/>
            <person name="Henaut A."/>
            <person name="Hilbert H."/>
            <person name="Holsappel S."/>
            <person name="Hosono S."/>
            <person name="Hullo M.-F."/>
            <person name="Itaya M."/>
            <person name="Jones L.-M."/>
            <person name="Joris B."/>
            <person name="Karamata D."/>
            <person name="Kasahara Y."/>
            <person name="Klaerr-Blanchard M."/>
            <person name="Klein C."/>
            <person name="Kobayashi Y."/>
            <person name="Koetter P."/>
            <person name="Koningstein G."/>
            <person name="Krogh S."/>
            <person name="Kumano M."/>
            <person name="Kurita K."/>
            <person name="Lapidus A."/>
            <person name="Lardinois S."/>
            <person name="Lauber J."/>
            <person name="Lazarevic V."/>
            <person name="Lee S.-M."/>
            <person name="Levine A."/>
            <person name="Liu H."/>
            <person name="Masuda S."/>
            <person name="Mauel C."/>
            <person name="Medigue C."/>
            <person name="Medina N."/>
            <person name="Mellado R.P."/>
            <person name="Mizuno M."/>
            <person name="Moestl D."/>
            <person name="Nakai S."/>
            <person name="Noback M."/>
            <person name="Noone D."/>
            <person name="O'Reilly M."/>
            <person name="Ogawa K."/>
            <person name="Ogiwara A."/>
            <person name="Oudega B."/>
            <person name="Park S.-H."/>
            <person name="Parro V."/>
            <person name="Pohl T.M."/>
            <person name="Portetelle D."/>
            <person name="Porwollik S."/>
            <person name="Prescott A.M."/>
            <person name="Presecan E."/>
            <person name="Pujic P."/>
            <person name="Purnelle B."/>
            <person name="Rapoport G."/>
            <person name="Rey M."/>
            <person name="Reynolds S."/>
            <person name="Rieger M."/>
            <person name="Rivolta C."/>
            <person name="Rocha E."/>
            <person name="Roche B."/>
            <person name="Rose M."/>
            <person name="Sadaie Y."/>
            <person name="Sato T."/>
            <person name="Scanlan E."/>
            <person name="Schleich S."/>
            <person name="Schroeter R."/>
            <person name="Scoffone F."/>
            <person name="Sekiguchi J."/>
            <person name="Sekowska A."/>
            <person name="Seror S.J."/>
            <person name="Serror P."/>
            <person name="Shin B.-S."/>
            <person name="Soldo B."/>
            <person name="Sorokin A."/>
            <person name="Tacconi E."/>
            <person name="Takagi T."/>
            <person name="Takahashi H."/>
            <person name="Takemaru K."/>
            <person name="Takeuchi M."/>
            <person name="Tamakoshi A."/>
            <person name="Tanaka T."/>
            <person name="Terpstra P."/>
            <person name="Tognoni A."/>
            <person name="Tosato V."/>
            <person name="Uchiyama S."/>
            <person name="Vandenbol M."/>
            <person name="Vannier F."/>
            <person name="Vassarotti A."/>
            <person name="Viari A."/>
            <person name="Wambutt R."/>
            <person name="Wedler E."/>
            <person name="Wedler H."/>
            <person name="Weitzenegger T."/>
            <person name="Winters P."/>
            <person name="Wipat A."/>
            <person name="Yamamoto H."/>
            <person name="Yamane K."/>
            <person name="Yasumoto K."/>
            <person name="Yata K."/>
            <person name="Yoshida K."/>
            <person name="Yoshikawa H.-F."/>
            <person name="Zumstein E."/>
            <person name="Yoshikawa H."/>
            <person name="Danchin A."/>
        </authorList>
    </citation>
    <scope>NUCLEOTIDE SEQUENCE [LARGE SCALE GENOMIC DNA]</scope>
    <source>
        <strain>168</strain>
    </source>
</reference>
<reference key="3">
    <citation type="journal article" date="2009" name="Microbiology">
        <title>From a consortium sequence to a unified sequence: the Bacillus subtilis 168 reference genome a decade later.</title>
        <authorList>
            <person name="Barbe V."/>
            <person name="Cruveiller S."/>
            <person name="Kunst F."/>
            <person name="Lenoble P."/>
            <person name="Meurice G."/>
            <person name="Sekowska A."/>
            <person name="Vallenet D."/>
            <person name="Wang T."/>
            <person name="Moszer I."/>
            <person name="Medigue C."/>
            <person name="Danchin A."/>
        </authorList>
    </citation>
    <scope>SEQUENCE REVISION</scope>
</reference>
<reference key="4">
    <citation type="journal article" date="2001" name="J. Bacteriol.">
        <title>Comprehensive DNA microarray analysis of Bacillus subtilis two-component regulatory systems.</title>
        <authorList>
            <person name="Kobayashi K."/>
            <person name="Ogura M."/>
            <person name="Yamaguchi H."/>
            <person name="Yoshida K."/>
            <person name="Ogasawara N."/>
            <person name="Tanaka T."/>
            <person name="Fujita Y."/>
        </authorList>
    </citation>
    <scope>FUNCTION</scope>
</reference>
<protein>
    <recommendedName>
        <fullName>Sensor histidine kinase YcbM</fullName>
        <ecNumber>2.7.13.3</ecNumber>
    </recommendedName>
</protein>
<proteinExistence type="inferred from homology"/>